<feature type="chain" id="PRO_0000256474" description="1-deoxy-D-xylulose-5-phosphate synthase 2">
    <location>
        <begin position="1"/>
        <end position="645"/>
    </location>
</feature>
<feature type="binding site" evidence="1">
    <location>
        <position position="79"/>
    </location>
    <ligand>
        <name>thiamine diphosphate</name>
        <dbReference type="ChEBI" id="CHEBI:58937"/>
    </ligand>
</feature>
<feature type="binding site" evidence="1">
    <location>
        <begin position="120"/>
        <end position="122"/>
    </location>
    <ligand>
        <name>thiamine diphosphate</name>
        <dbReference type="ChEBI" id="CHEBI:58937"/>
    </ligand>
</feature>
<feature type="binding site" evidence="1">
    <location>
        <position position="151"/>
    </location>
    <ligand>
        <name>Mg(2+)</name>
        <dbReference type="ChEBI" id="CHEBI:18420"/>
    </ligand>
</feature>
<feature type="binding site" evidence="1">
    <location>
        <begin position="152"/>
        <end position="153"/>
    </location>
    <ligand>
        <name>thiamine diphosphate</name>
        <dbReference type="ChEBI" id="CHEBI:58937"/>
    </ligand>
</feature>
<feature type="binding site" evidence="1">
    <location>
        <position position="180"/>
    </location>
    <ligand>
        <name>Mg(2+)</name>
        <dbReference type="ChEBI" id="CHEBI:18420"/>
    </ligand>
</feature>
<feature type="binding site" evidence="1">
    <location>
        <position position="180"/>
    </location>
    <ligand>
        <name>thiamine diphosphate</name>
        <dbReference type="ChEBI" id="CHEBI:58937"/>
    </ligand>
</feature>
<feature type="binding site" evidence="1">
    <location>
        <position position="291"/>
    </location>
    <ligand>
        <name>thiamine diphosphate</name>
        <dbReference type="ChEBI" id="CHEBI:58937"/>
    </ligand>
</feature>
<feature type="binding site" evidence="1">
    <location>
        <position position="373"/>
    </location>
    <ligand>
        <name>thiamine diphosphate</name>
        <dbReference type="ChEBI" id="CHEBI:58937"/>
    </ligand>
</feature>
<organism>
    <name type="scientific">Rhodospirillum rubrum (strain ATCC 11170 / ATH 1.1.1 / DSM 467 / LMG 4362 / NCIMB 8255 / S1)</name>
    <dbReference type="NCBI Taxonomy" id="269796"/>
    <lineage>
        <taxon>Bacteria</taxon>
        <taxon>Pseudomonadati</taxon>
        <taxon>Pseudomonadota</taxon>
        <taxon>Alphaproteobacteria</taxon>
        <taxon>Rhodospirillales</taxon>
        <taxon>Rhodospirillaceae</taxon>
        <taxon>Rhodospirillum</taxon>
    </lineage>
</organism>
<keyword id="KW-0414">Isoprene biosynthesis</keyword>
<keyword id="KW-0460">Magnesium</keyword>
<keyword id="KW-0479">Metal-binding</keyword>
<keyword id="KW-1185">Reference proteome</keyword>
<keyword id="KW-0784">Thiamine biosynthesis</keyword>
<keyword id="KW-0786">Thiamine pyrophosphate</keyword>
<keyword id="KW-0808">Transferase</keyword>
<sequence>MTSRPITPLLDTIRGPSDTRGLSVAQLEQLAREVRAEMIDAVSVTGGHLGSGLGVVELTVALHHVFDTPDDRIIWDVGHQCYPHKILTGRRDRIRTLRQGGGLSGFTLREESPYDPFGAGHSSTSISAGLGMAIGSALAGDARDVVAVIGDGSMSAGMAYEAMNNAGAAKSRLIVILNDNDMSIAPPVGAMSAYLSRLLSSKSWLSIRTLAKEIVARLPDALERTAKRAEEYARGMVTGGGTLFEEMGFYYVGPIDGHRMDHLVPVLRNVREAGRDGPVLIHVVTQKGKGYAPAENAPDKYHGVSRFNVVTGVQEKAKPQAPSYTAVFGKQLVAAAAKDHRIVAVTAAMPGGTGLDKLAAAYPQRCFDVGIAEQHAVTFAAGLACEGLKPFVALYSSFLQRGYDQVVHDVVLQKLPVRFAIDRAGFVGADGATHGGVFDMAFLGCLPNLVVMCAADEAELARMVVTAAGHDSGPIALRYPRGEGVGVEIPEDPQPLAIGKGRIVREGKGVALLSIGTRLQSCLEACEILAARGLTPTVADARFLKPFDEELVADLAARHEVLIVVEEGAIGGFCSHVATWLANQGLLDGGLKLRALHIPDRFFEHDAPEVQCAKAGIDAQAITTAVLDALKLETSATIDAGALKA</sequence>
<proteinExistence type="inferred from homology"/>
<name>DXS2_RHORT</name>
<gene>
    <name evidence="1" type="primary">dxs2</name>
    <name type="ordered locus">Rru_A2619</name>
</gene>
<accession>Q2RR29</accession>
<evidence type="ECO:0000255" key="1">
    <source>
        <dbReference type="HAMAP-Rule" id="MF_00315"/>
    </source>
</evidence>
<reference key="1">
    <citation type="journal article" date="2011" name="Stand. Genomic Sci.">
        <title>Complete genome sequence of Rhodospirillum rubrum type strain (S1).</title>
        <authorList>
            <person name="Munk A.C."/>
            <person name="Copeland A."/>
            <person name="Lucas S."/>
            <person name="Lapidus A."/>
            <person name="Del Rio T.G."/>
            <person name="Barry K."/>
            <person name="Detter J.C."/>
            <person name="Hammon N."/>
            <person name="Israni S."/>
            <person name="Pitluck S."/>
            <person name="Brettin T."/>
            <person name="Bruce D."/>
            <person name="Han C."/>
            <person name="Tapia R."/>
            <person name="Gilna P."/>
            <person name="Schmutz J."/>
            <person name="Larimer F."/>
            <person name="Land M."/>
            <person name="Kyrpides N.C."/>
            <person name="Mavromatis K."/>
            <person name="Richardson P."/>
            <person name="Rohde M."/>
            <person name="Goeker M."/>
            <person name="Klenk H.P."/>
            <person name="Zhang Y."/>
            <person name="Roberts G.P."/>
            <person name="Reslewic S."/>
            <person name="Schwartz D.C."/>
        </authorList>
    </citation>
    <scope>NUCLEOTIDE SEQUENCE [LARGE SCALE GENOMIC DNA]</scope>
    <source>
        <strain>ATCC 11170 / ATH 1.1.1 / DSM 467 / LMG 4362 / NCIMB 8255 / S1</strain>
    </source>
</reference>
<comment type="function">
    <text evidence="1">Catalyzes the acyloin condensation reaction between C atoms 2 and 3 of pyruvate and glyceraldehyde 3-phosphate to yield 1-deoxy-D-xylulose-5-phosphate (DXP).</text>
</comment>
<comment type="catalytic activity">
    <reaction evidence="1">
        <text>D-glyceraldehyde 3-phosphate + pyruvate + H(+) = 1-deoxy-D-xylulose 5-phosphate + CO2</text>
        <dbReference type="Rhea" id="RHEA:12605"/>
        <dbReference type="ChEBI" id="CHEBI:15361"/>
        <dbReference type="ChEBI" id="CHEBI:15378"/>
        <dbReference type="ChEBI" id="CHEBI:16526"/>
        <dbReference type="ChEBI" id="CHEBI:57792"/>
        <dbReference type="ChEBI" id="CHEBI:59776"/>
        <dbReference type="EC" id="2.2.1.7"/>
    </reaction>
</comment>
<comment type="cofactor">
    <cofactor evidence="1">
        <name>Mg(2+)</name>
        <dbReference type="ChEBI" id="CHEBI:18420"/>
    </cofactor>
    <text evidence="1">Binds 1 Mg(2+) ion per subunit.</text>
</comment>
<comment type="cofactor">
    <cofactor evidence="1">
        <name>thiamine diphosphate</name>
        <dbReference type="ChEBI" id="CHEBI:58937"/>
    </cofactor>
    <text evidence="1">Binds 1 thiamine pyrophosphate per subunit.</text>
</comment>
<comment type="pathway">
    <text evidence="1">Metabolic intermediate biosynthesis; 1-deoxy-D-xylulose 5-phosphate biosynthesis; 1-deoxy-D-xylulose 5-phosphate from D-glyceraldehyde 3-phosphate and pyruvate: step 1/1.</text>
</comment>
<comment type="subunit">
    <text evidence="1">Homodimer.</text>
</comment>
<comment type="similarity">
    <text evidence="1">Belongs to the transketolase family. DXPS subfamily.</text>
</comment>
<dbReference type="EC" id="2.2.1.7" evidence="1"/>
<dbReference type="EMBL" id="CP000230">
    <property type="protein sequence ID" value="ABC23416.1"/>
    <property type="molecule type" value="Genomic_DNA"/>
</dbReference>
<dbReference type="RefSeq" id="YP_427703.1">
    <property type="nucleotide sequence ID" value="NC_007643.1"/>
</dbReference>
<dbReference type="SMR" id="Q2RR29"/>
<dbReference type="STRING" id="269796.Rru_A2619"/>
<dbReference type="EnsemblBacteria" id="ABC23416">
    <property type="protein sequence ID" value="ABC23416"/>
    <property type="gene ID" value="Rru_A2619"/>
</dbReference>
<dbReference type="KEGG" id="rru:Rru_A2619"/>
<dbReference type="PATRIC" id="fig|269796.9.peg.2729"/>
<dbReference type="eggNOG" id="COG1154">
    <property type="taxonomic scope" value="Bacteria"/>
</dbReference>
<dbReference type="HOGENOM" id="CLU_009227_1_4_5"/>
<dbReference type="PhylomeDB" id="Q2RR29"/>
<dbReference type="UniPathway" id="UPA00064">
    <property type="reaction ID" value="UER00091"/>
</dbReference>
<dbReference type="Proteomes" id="UP000001929">
    <property type="component" value="Chromosome"/>
</dbReference>
<dbReference type="GO" id="GO:0008661">
    <property type="term" value="F:1-deoxy-D-xylulose-5-phosphate synthase activity"/>
    <property type="evidence" value="ECO:0007669"/>
    <property type="project" value="UniProtKB-UniRule"/>
</dbReference>
<dbReference type="GO" id="GO:0000287">
    <property type="term" value="F:magnesium ion binding"/>
    <property type="evidence" value="ECO:0007669"/>
    <property type="project" value="UniProtKB-UniRule"/>
</dbReference>
<dbReference type="GO" id="GO:0030976">
    <property type="term" value="F:thiamine pyrophosphate binding"/>
    <property type="evidence" value="ECO:0007669"/>
    <property type="project" value="UniProtKB-UniRule"/>
</dbReference>
<dbReference type="GO" id="GO:0052865">
    <property type="term" value="P:1-deoxy-D-xylulose 5-phosphate biosynthetic process"/>
    <property type="evidence" value="ECO:0007669"/>
    <property type="project" value="UniProtKB-UniPathway"/>
</dbReference>
<dbReference type="GO" id="GO:0019682">
    <property type="term" value="P:glyceraldehyde-3-phosphate metabolic process"/>
    <property type="evidence" value="ECO:0007669"/>
    <property type="project" value="UniProtKB-ARBA"/>
</dbReference>
<dbReference type="GO" id="GO:0016114">
    <property type="term" value="P:terpenoid biosynthetic process"/>
    <property type="evidence" value="ECO:0007669"/>
    <property type="project" value="UniProtKB-UniRule"/>
</dbReference>
<dbReference type="GO" id="GO:0009228">
    <property type="term" value="P:thiamine biosynthetic process"/>
    <property type="evidence" value="ECO:0007669"/>
    <property type="project" value="UniProtKB-UniRule"/>
</dbReference>
<dbReference type="CDD" id="cd02007">
    <property type="entry name" value="TPP_DXS"/>
    <property type="match status" value="1"/>
</dbReference>
<dbReference type="CDD" id="cd07033">
    <property type="entry name" value="TPP_PYR_DXS_TK_like"/>
    <property type="match status" value="1"/>
</dbReference>
<dbReference type="FunFam" id="3.40.50.920:FF:000002">
    <property type="entry name" value="1-deoxy-D-xylulose-5-phosphate synthase"/>
    <property type="match status" value="1"/>
</dbReference>
<dbReference type="FunFam" id="3.40.50.970:FF:000005">
    <property type="entry name" value="1-deoxy-D-xylulose-5-phosphate synthase"/>
    <property type="match status" value="1"/>
</dbReference>
<dbReference type="Gene3D" id="3.40.50.920">
    <property type="match status" value="1"/>
</dbReference>
<dbReference type="Gene3D" id="3.40.50.970">
    <property type="match status" value="2"/>
</dbReference>
<dbReference type="HAMAP" id="MF_00315">
    <property type="entry name" value="DXP_synth"/>
    <property type="match status" value="1"/>
</dbReference>
<dbReference type="InterPro" id="IPR005477">
    <property type="entry name" value="Dxylulose-5-P_synthase"/>
</dbReference>
<dbReference type="InterPro" id="IPR029061">
    <property type="entry name" value="THDP-binding"/>
</dbReference>
<dbReference type="InterPro" id="IPR009014">
    <property type="entry name" value="Transketo_C/PFOR_II"/>
</dbReference>
<dbReference type="InterPro" id="IPR005475">
    <property type="entry name" value="Transketolase-like_Pyr-bd"/>
</dbReference>
<dbReference type="InterPro" id="IPR020826">
    <property type="entry name" value="Transketolase_BS"/>
</dbReference>
<dbReference type="InterPro" id="IPR033248">
    <property type="entry name" value="Transketolase_C"/>
</dbReference>
<dbReference type="InterPro" id="IPR049557">
    <property type="entry name" value="Transketolase_CS"/>
</dbReference>
<dbReference type="NCBIfam" id="TIGR00204">
    <property type="entry name" value="dxs"/>
    <property type="match status" value="1"/>
</dbReference>
<dbReference type="NCBIfam" id="NF003933">
    <property type="entry name" value="PRK05444.2-2"/>
    <property type="match status" value="1"/>
</dbReference>
<dbReference type="PANTHER" id="PTHR43322">
    <property type="entry name" value="1-D-DEOXYXYLULOSE 5-PHOSPHATE SYNTHASE-RELATED"/>
    <property type="match status" value="1"/>
</dbReference>
<dbReference type="PANTHER" id="PTHR43322:SF5">
    <property type="entry name" value="1-DEOXY-D-XYLULOSE-5-PHOSPHATE SYNTHASE, CHLOROPLASTIC"/>
    <property type="match status" value="1"/>
</dbReference>
<dbReference type="Pfam" id="PF13292">
    <property type="entry name" value="DXP_synthase_N"/>
    <property type="match status" value="1"/>
</dbReference>
<dbReference type="Pfam" id="PF02779">
    <property type="entry name" value="Transket_pyr"/>
    <property type="match status" value="1"/>
</dbReference>
<dbReference type="Pfam" id="PF02780">
    <property type="entry name" value="Transketolase_C"/>
    <property type="match status" value="1"/>
</dbReference>
<dbReference type="SMART" id="SM00861">
    <property type="entry name" value="Transket_pyr"/>
    <property type="match status" value="1"/>
</dbReference>
<dbReference type="SUPFAM" id="SSF52518">
    <property type="entry name" value="Thiamin diphosphate-binding fold (THDP-binding)"/>
    <property type="match status" value="2"/>
</dbReference>
<dbReference type="SUPFAM" id="SSF52922">
    <property type="entry name" value="TK C-terminal domain-like"/>
    <property type="match status" value="1"/>
</dbReference>
<dbReference type="PROSITE" id="PS00801">
    <property type="entry name" value="TRANSKETOLASE_1"/>
    <property type="match status" value="1"/>
</dbReference>
<dbReference type="PROSITE" id="PS00802">
    <property type="entry name" value="TRANSKETOLASE_2"/>
    <property type="match status" value="1"/>
</dbReference>
<protein>
    <recommendedName>
        <fullName evidence="1">1-deoxy-D-xylulose-5-phosphate synthase 2</fullName>
        <ecNumber evidence="1">2.2.1.7</ecNumber>
    </recommendedName>
    <alternativeName>
        <fullName evidence="1">1-deoxyxylulose-5-phosphate synthase 2</fullName>
        <shortName evidence="1">DXP synthase 2</shortName>
        <shortName evidence="1">DXPS 2</shortName>
    </alternativeName>
</protein>